<keyword id="KW-0066">ATP synthesis</keyword>
<keyword id="KW-0997">Cell inner membrane</keyword>
<keyword id="KW-1003">Cell membrane</keyword>
<keyword id="KW-0138">CF(0)</keyword>
<keyword id="KW-0375">Hydrogen ion transport</keyword>
<keyword id="KW-0406">Ion transport</keyword>
<keyword id="KW-0472">Membrane</keyword>
<keyword id="KW-1185">Reference proteome</keyword>
<keyword id="KW-0812">Transmembrane</keyword>
<keyword id="KW-1133">Transmembrane helix</keyword>
<keyword id="KW-0813">Transport</keyword>
<comment type="function">
    <text evidence="1">F(1)F(0) ATP synthase produces ATP from ADP in the presence of a proton or sodium gradient. F-type ATPases consist of two structural domains, F(1) containing the extramembraneous catalytic core and F(0) containing the membrane proton channel, linked together by a central stalk and a peripheral stalk. During catalysis, ATP synthesis in the catalytic domain of F(1) is coupled via a rotary mechanism of the central stalk subunits to proton translocation.</text>
</comment>
<comment type="function">
    <text evidence="1">Component of the F(0) channel, it forms part of the peripheral stalk, linking F(1) to F(0).</text>
</comment>
<comment type="subunit">
    <text evidence="1">F-type ATPases have 2 components, F(1) - the catalytic core - and F(0) - the membrane proton channel. F(1) has five subunits: alpha(3), beta(3), gamma(1), delta(1), epsilon(1). F(0) has three main subunits: a(1), b(2) and c(10-14). The alpha and beta chains form an alternating ring which encloses part of the gamma chain. F(1) is attached to F(0) by a central stalk formed by the gamma and epsilon chains, while a peripheral stalk is formed by the delta and b chains.</text>
</comment>
<comment type="subcellular location">
    <subcellularLocation>
        <location evidence="1">Cell inner membrane</location>
        <topology evidence="1">Single-pass membrane protein</topology>
    </subcellularLocation>
</comment>
<comment type="similarity">
    <text evidence="1">Belongs to the ATPase B chain family.</text>
</comment>
<gene>
    <name evidence="1" type="primary">atpF</name>
    <name type="ordered locus">Bmul_0102</name>
    <name type="ordered locus">BMULJ_03163</name>
</gene>
<evidence type="ECO:0000255" key="1">
    <source>
        <dbReference type="HAMAP-Rule" id="MF_01398"/>
    </source>
</evidence>
<name>ATPF_BURM1</name>
<dbReference type="EMBL" id="CP000868">
    <property type="protein sequence ID" value="ABX13797.1"/>
    <property type="molecule type" value="Genomic_DNA"/>
</dbReference>
<dbReference type="EMBL" id="AP009385">
    <property type="protein sequence ID" value="BAG45037.1"/>
    <property type="molecule type" value="Genomic_DNA"/>
</dbReference>
<dbReference type="RefSeq" id="WP_006401466.1">
    <property type="nucleotide sequence ID" value="NC_010804.1"/>
</dbReference>
<dbReference type="SMR" id="A9AJG0"/>
<dbReference type="STRING" id="395019.BMULJ_03163"/>
<dbReference type="KEGG" id="bmj:BMULJ_03163"/>
<dbReference type="KEGG" id="bmu:Bmul_0102"/>
<dbReference type="eggNOG" id="COG0711">
    <property type="taxonomic scope" value="Bacteria"/>
</dbReference>
<dbReference type="HOGENOM" id="CLU_079215_4_5_4"/>
<dbReference type="Proteomes" id="UP000008815">
    <property type="component" value="Chromosome 1"/>
</dbReference>
<dbReference type="GO" id="GO:0005886">
    <property type="term" value="C:plasma membrane"/>
    <property type="evidence" value="ECO:0007669"/>
    <property type="project" value="UniProtKB-SubCell"/>
</dbReference>
<dbReference type="GO" id="GO:0045259">
    <property type="term" value="C:proton-transporting ATP synthase complex"/>
    <property type="evidence" value="ECO:0007669"/>
    <property type="project" value="UniProtKB-KW"/>
</dbReference>
<dbReference type="GO" id="GO:0046933">
    <property type="term" value="F:proton-transporting ATP synthase activity, rotational mechanism"/>
    <property type="evidence" value="ECO:0007669"/>
    <property type="project" value="UniProtKB-UniRule"/>
</dbReference>
<dbReference type="GO" id="GO:0046961">
    <property type="term" value="F:proton-transporting ATPase activity, rotational mechanism"/>
    <property type="evidence" value="ECO:0007669"/>
    <property type="project" value="TreeGrafter"/>
</dbReference>
<dbReference type="CDD" id="cd06503">
    <property type="entry name" value="ATP-synt_Fo_b"/>
    <property type="match status" value="1"/>
</dbReference>
<dbReference type="Gene3D" id="6.10.250.1580">
    <property type="match status" value="1"/>
</dbReference>
<dbReference type="HAMAP" id="MF_01398">
    <property type="entry name" value="ATP_synth_b_bprime"/>
    <property type="match status" value="1"/>
</dbReference>
<dbReference type="InterPro" id="IPR028987">
    <property type="entry name" value="ATP_synth_B-like_membr_sf"/>
</dbReference>
<dbReference type="InterPro" id="IPR002146">
    <property type="entry name" value="ATP_synth_b/b'su_bac/chlpt"/>
</dbReference>
<dbReference type="InterPro" id="IPR005864">
    <property type="entry name" value="ATP_synth_F0_bsu_bac"/>
</dbReference>
<dbReference type="InterPro" id="IPR050059">
    <property type="entry name" value="ATP_synthase_B_chain"/>
</dbReference>
<dbReference type="NCBIfam" id="TIGR01144">
    <property type="entry name" value="ATP_synt_b"/>
    <property type="match status" value="1"/>
</dbReference>
<dbReference type="NCBIfam" id="NF004411">
    <property type="entry name" value="PRK05759.1-2"/>
    <property type="match status" value="1"/>
</dbReference>
<dbReference type="PANTHER" id="PTHR33445:SF1">
    <property type="entry name" value="ATP SYNTHASE SUBUNIT B"/>
    <property type="match status" value="1"/>
</dbReference>
<dbReference type="PANTHER" id="PTHR33445">
    <property type="entry name" value="ATP SYNTHASE SUBUNIT B', CHLOROPLASTIC"/>
    <property type="match status" value="1"/>
</dbReference>
<dbReference type="Pfam" id="PF00430">
    <property type="entry name" value="ATP-synt_B"/>
    <property type="match status" value="1"/>
</dbReference>
<dbReference type="SUPFAM" id="SSF81573">
    <property type="entry name" value="F1F0 ATP synthase subunit B, membrane domain"/>
    <property type="match status" value="1"/>
</dbReference>
<protein>
    <recommendedName>
        <fullName evidence="1">ATP synthase subunit b</fullName>
    </recommendedName>
    <alternativeName>
        <fullName evidence="1">ATP synthase F(0) sector subunit b</fullName>
    </alternativeName>
    <alternativeName>
        <fullName evidence="1">ATPase subunit I</fullName>
    </alternativeName>
    <alternativeName>
        <fullName evidence="1">F-type ATPase subunit b</fullName>
        <shortName evidence="1">F-ATPase subunit b</shortName>
    </alternativeName>
</protein>
<sequence length="156" mass="17076">MNLNATLFAQMVVFLVLAWFTMKFVWPPLINALDERSKKIADGLAAAEKGKAELEAAHKRVDQELAQARNDGQQRIADAEKRAQAVAEEIKANAQAEAARIVAQAKAEAEQQIVKAREALRGEVAALAVKGAEQILKREVDQTAHAQLLNQLKAEL</sequence>
<proteinExistence type="inferred from homology"/>
<feature type="chain" id="PRO_0000368388" description="ATP synthase subunit b">
    <location>
        <begin position="1"/>
        <end position="156"/>
    </location>
</feature>
<feature type="transmembrane region" description="Helical" evidence="1">
    <location>
        <begin position="7"/>
        <end position="29"/>
    </location>
</feature>
<organism>
    <name type="scientific">Burkholderia multivorans (strain ATCC 17616 / 249)</name>
    <dbReference type="NCBI Taxonomy" id="395019"/>
    <lineage>
        <taxon>Bacteria</taxon>
        <taxon>Pseudomonadati</taxon>
        <taxon>Pseudomonadota</taxon>
        <taxon>Betaproteobacteria</taxon>
        <taxon>Burkholderiales</taxon>
        <taxon>Burkholderiaceae</taxon>
        <taxon>Burkholderia</taxon>
        <taxon>Burkholderia cepacia complex</taxon>
    </lineage>
</organism>
<reference key="1">
    <citation type="submission" date="2007-10" db="EMBL/GenBank/DDBJ databases">
        <title>Complete sequence of chromosome 1 of Burkholderia multivorans ATCC 17616.</title>
        <authorList>
            <person name="Copeland A."/>
            <person name="Lucas S."/>
            <person name="Lapidus A."/>
            <person name="Barry K."/>
            <person name="Glavina del Rio T."/>
            <person name="Dalin E."/>
            <person name="Tice H."/>
            <person name="Pitluck S."/>
            <person name="Chain P."/>
            <person name="Malfatti S."/>
            <person name="Shin M."/>
            <person name="Vergez L."/>
            <person name="Schmutz J."/>
            <person name="Larimer F."/>
            <person name="Land M."/>
            <person name="Hauser L."/>
            <person name="Kyrpides N."/>
            <person name="Kim E."/>
            <person name="Tiedje J."/>
            <person name="Richardson P."/>
        </authorList>
    </citation>
    <scope>NUCLEOTIDE SEQUENCE [LARGE SCALE GENOMIC DNA]</scope>
    <source>
        <strain>ATCC 17616 / 249</strain>
    </source>
</reference>
<reference key="2">
    <citation type="submission" date="2007-04" db="EMBL/GenBank/DDBJ databases">
        <title>Complete genome sequence of Burkholderia multivorans ATCC 17616.</title>
        <authorList>
            <person name="Ohtsubo Y."/>
            <person name="Yamashita A."/>
            <person name="Kurokawa K."/>
            <person name="Takami H."/>
            <person name="Yuhara S."/>
            <person name="Nishiyama E."/>
            <person name="Endo R."/>
            <person name="Miyazaki R."/>
            <person name="Ono A."/>
            <person name="Yano K."/>
            <person name="Ito M."/>
            <person name="Sota M."/>
            <person name="Yuji N."/>
            <person name="Hattori M."/>
            <person name="Tsuda M."/>
        </authorList>
    </citation>
    <scope>NUCLEOTIDE SEQUENCE [LARGE SCALE GENOMIC DNA]</scope>
    <source>
        <strain>ATCC 17616 / 249</strain>
    </source>
</reference>
<accession>A9AJG0</accession>